<protein>
    <recommendedName>
        <fullName>F-box/LRR-repeat protein 4</fullName>
    </recommendedName>
    <alternativeName>
        <fullName>F-box and leucine-rich repeat protein 4</fullName>
    </alternativeName>
</protein>
<dbReference type="EMBL" id="BC119862">
    <property type="protein sequence ID" value="AAI19863.1"/>
    <property type="molecule type" value="mRNA"/>
</dbReference>
<dbReference type="RefSeq" id="NP_001069527.1">
    <property type="nucleotide sequence ID" value="NM_001076059.1"/>
</dbReference>
<dbReference type="SMR" id="Q0VD31"/>
<dbReference type="FunCoup" id="Q0VD31">
    <property type="interactions" value="1770"/>
</dbReference>
<dbReference type="STRING" id="9913.ENSBTAP00000007531"/>
<dbReference type="GeneID" id="535452"/>
<dbReference type="KEGG" id="bta:535452"/>
<dbReference type="CTD" id="26235"/>
<dbReference type="InParanoid" id="Q0VD31"/>
<dbReference type="OrthoDB" id="2153609at2759"/>
<dbReference type="Proteomes" id="UP000009136">
    <property type="component" value="Unplaced"/>
</dbReference>
<dbReference type="GO" id="GO:0005737">
    <property type="term" value="C:cytoplasm"/>
    <property type="evidence" value="ECO:0000318"/>
    <property type="project" value="GO_Central"/>
</dbReference>
<dbReference type="GO" id="GO:0005758">
    <property type="term" value="C:mitochondrial intermembrane space"/>
    <property type="evidence" value="ECO:0000250"/>
    <property type="project" value="UniProtKB"/>
</dbReference>
<dbReference type="GO" id="GO:0005741">
    <property type="term" value="C:mitochondrial outer membrane"/>
    <property type="evidence" value="ECO:0007669"/>
    <property type="project" value="UniProtKB-SubCell"/>
</dbReference>
<dbReference type="GO" id="GO:0005634">
    <property type="term" value="C:nucleus"/>
    <property type="evidence" value="ECO:0007669"/>
    <property type="project" value="UniProtKB-SubCell"/>
</dbReference>
<dbReference type="CDD" id="cd22117">
    <property type="entry name" value="F-box_FBXL4"/>
    <property type="match status" value="1"/>
</dbReference>
<dbReference type="FunFam" id="1.20.1280.50:FF:000050">
    <property type="entry name" value="F-box and leucine-rich repeat protein 4"/>
    <property type="match status" value="1"/>
</dbReference>
<dbReference type="FunFam" id="3.80.10.10:FF:000152">
    <property type="entry name" value="F-box/LRR-repeat protein 4 isoform X1"/>
    <property type="match status" value="1"/>
</dbReference>
<dbReference type="FunFam" id="3.80.10.10:FF:000417">
    <property type="entry name" value="F-box/LRR-repeat protein 4 isoform X1"/>
    <property type="match status" value="1"/>
</dbReference>
<dbReference type="Gene3D" id="3.80.10.10">
    <property type="entry name" value="Ribonuclease Inhibitor"/>
    <property type="match status" value="2"/>
</dbReference>
<dbReference type="InterPro" id="IPR036047">
    <property type="entry name" value="F-box-like_dom_sf"/>
</dbReference>
<dbReference type="InterPro" id="IPR001810">
    <property type="entry name" value="F-box_dom"/>
</dbReference>
<dbReference type="InterPro" id="IPR006553">
    <property type="entry name" value="Leu-rich_rpt_Cys-con_subtyp"/>
</dbReference>
<dbReference type="InterPro" id="IPR032675">
    <property type="entry name" value="LRR_dom_sf"/>
</dbReference>
<dbReference type="PANTHER" id="PTHR13318:SF152">
    <property type="entry name" value="F-BOX_LRR-REPEAT PROTEIN 4"/>
    <property type="match status" value="1"/>
</dbReference>
<dbReference type="PANTHER" id="PTHR13318">
    <property type="entry name" value="PARTNER OF PAIRED, ISOFORM B-RELATED"/>
    <property type="match status" value="1"/>
</dbReference>
<dbReference type="Pfam" id="PF12937">
    <property type="entry name" value="F-box-like"/>
    <property type="match status" value="1"/>
</dbReference>
<dbReference type="SMART" id="SM00256">
    <property type="entry name" value="FBOX"/>
    <property type="match status" value="1"/>
</dbReference>
<dbReference type="SMART" id="SM00367">
    <property type="entry name" value="LRR_CC"/>
    <property type="match status" value="7"/>
</dbReference>
<dbReference type="SUPFAM" id="SSF81383">
    <property type="entry name" value="F-box domain"/>
    <property type="match status" value="1"/>
</dbReference>
<dbReference type="SUPFAM" id="SSF52047">
    <property type="entry name" value="RNI-like"/>
    <property type="match status" value="1"/>
</dbReference>
<dbReference type="PROSITE" id="PS50181">
    <property type="entry name" value="FBOX"/>
    <property type="match status" value="1"/>
</dbReference>
<keyword id="KW-0963">Cytoplasm</keyword>
<keyword id="KW-0433">Leucine-rich repeat</keyword>
<keyword id="KW-0472">Membrane</keyword>
<keyword id="KW-0488">Methylation</keyword>
<keyword id="KW-0496">Mitochondrion</keyword>
<keyword id="KW-1000">Mitochondrion outer membrane</keyword>
<keyword id="KW-0539">Nucleus</keyword>
<keyword id="KW-1185">Reference proteome</keyword>
<keyword id="KW-0677">Repeat</keyword>
<keyword id="KW-0833">Ubl conjugation pathway</keyword>
<evidence type="ECO:0000250" key="1">
    <source>
        <dbReference type="UniProtKB" id="Q8BH70"/>
    </source>
</evidence>
<evidence type="ECO:0000250" key="2">
    <source>
        <dbReference type="UniProtKB" id="Q9UKA2"/>
    </source>
</evidence>
<evidence type="ECO:0000255" key="3">
    <source>
        <dbReference type="PROSITE-ProRule" id="PRU00080"/>
    </source>
</evidence>
<name>FBXL4_BOVIN</name>
<feature type="chain" id="PRO_0000284976" description="F-box/LRR-repeat protein 4">
    <location>
        <begin position="1"/>
        <end position="621"/>
    </location>
</feature>
<feature type="domain" description="F-box" evidence="3">
    <location>
        <begin position="277"/>
        <end position="332"/>
    </location>
</feature>
<feature type="repeat" description="LRR 1">
    <location>
        <begin position="376"/>
        <end position="397"/>
    </location>
</feature>
<feature type="repeat" description="LRR 2">
    <location>
        <begin position="402"/>
        <end position="421"/>
    </location>
</feature>
<feature type="repeat" description="LRR 3">
    <location>
        <begin position="427"/>
        <end position="448"/>
    </location>
</feature>
<feature type="repeat" description="LRR 4">
    <location>
        <begin position="452"/>
        <end position="474"/>
    </location>
</feature>
<feature type="repeat" description="LRR 5">
    <location>
        <begin position="480"/>
        <end position="501"/>
    </location>
</feature>
<feature type="repeat" description="LRR 6">
    <location>
        <begin position="504"/>
        <end position="524"/>
    </location>
</feature>
<feature type="repeat" description="LRR 7">
    <location>
        <begin position="532"/>
        <end position="558"/>
    </location>
</feature>
<feature type="repeat" description="LRR 8">
    <location>
        <begin position="559"/>
        <end position="583"/>
    </location>
</feature>
<feature type="repeat" description="LRR 9">
    <location>
        <begin position="584"/>
        <end position="609"/>
    </location>
</feature>
<feature type="modified residue" description="Asymmetric dimethylarginine" evidence="1">
    <location>
        <position position="28"/>
    </location>
</feature>
<comment type="function">
    <text evidence="1 2">Substrate-recognition component of the mitochondria-localized SCF-FBXL4 ubiquitin E3 ligase complex that plays a role in the restriction of mitophagy by controlling the degradation of BNIP3 and NIX mitophagy receptors. Also rescues mitochondrial injury through reverting hyperactivation of DRP1-mediated mitochondrial fission (By similarity).</text>
</comment>
<comment type="subunit">
    <text evidence="2">Part of a SCF (SKP1-CUL1-F-box) protein ligase complex. Interacts with FAF2 and VCP. Interacts with PPTC7; this interaction promotes destruction of BNIP3 and NIX and mitophagy suppression.</text>
</comment>
<comment type="subcellular location">
    <subcellularLocation>
        <location evidence="2">Cytoplasm</location>
    </subcellularLocation>
    <subcellularLocation>
        <location evidence="2">Nucleus</location>
    </subcellularLocation>
    <subcellularLocation>
        <location evidence="2">Mitochondrion outer membrane</location>
    </subcellularLocation>
</comment>
<reference key="1">
    <citation type="submission" date="2006-08" db="EMBL/GenBank/DDBJ databases">
        <authorList>
            <consortium name="NIH - Mammalian Gene Collection (MGC) project"/>
        </authorList>
    </citation>
    <scope>NUCLEOTIDE SEQUENCE [LARGE SCALE MRNA]</scope>
    <source>
        <strain>Hereford</strain>
        <tissue>Thalamus</tissue>
    </source>
</reference>
<accession>Q0VD31</accession>
<organism>
    <name type="scientific">Bos taurus</name>
    <name type="common">Bovine</name>
    <dbReference type="NCBI Taxonomy" id="9913"/>
    <lineage>
        <taxon>Eukaryota</taxon>
        <taxon>Metazoa</taxon>
        <taxon>Chordata</taxon>
        <taxon>Craniata</taxon>
        <taxon>Vertebrata</taxon>
        <taxon>Euteleostomi</taxon>
        <taxon>Mammalia</taxon>
        <taxon>Eutheria</taxon>
        <taxon>Laurasiatheria</taxon>
        <taxon>Artiodactyla</taxon>
        <taxon>Ruminantia</taxon>
        <taxon>Pecora</taxon>
        <taxon>Bovidae</taxon>
        <taxon>Bovinae</taxon>
        <taxon>Bos</taxon>
    </lineage>
</organism>
<proteinExistence type="evidence at transcript level"/>
<sequence length="621" mass="70295">MSPVFPMLTVLTMFYYMCLRRRARTATRGEIMNSHRTVESNSRTSPLNAEVVQYAKEVVDFSSHYGSENSMSYTMWNLAGVPNVFPSSGDFTQTAVFRTYGTWWDQCPSAPVPFKRTPANFQSQDYVELAFEQQVYPTAVHVLETYHPGAVIRILACSANPYSPGPPAEVRWETLWSEKPTKVNASQARQFKPCIKQINFPTNLIRLEINSSLLDYYTELDAVVLHGMKDKPMLSLKTSLIDMNDLDEDDYEEKDDCEIDNLNKKFSSTALREGPSNGYFDKLPYELIQLILNHLTLPDLCRLAQTCKLLNQHCCDPLQYIHLNLQPYWAKLNDTSLEFLQARCTLVQWLNLSWTGNRGFISVAGFSRFLKVCGSELVRLELSCSHFLNETCLEIISEMCPNLQDLNLSSCDKLPPQAFSHIAKLCGLKRLVLYRTKVEQTALLSILNFCSDLQHLSLGSCVMIEDYDVTASMIGAKCKKLRTLDLWRCKNITESGIAELASGCPLLEELDLGWCPTLQSSTGCFARLARQLPNLQKLFLTANRSVCDTDIEELASNCTRLRQLDILGTRMVSPASLRKLLESCKDLSLLDVSFCSQIDNRAVLELSASFPKVFIKKSFTQ</sequence>
<gene>
    <name type="primary">FBXL4</name>
</gene>